<keyword id="KW-0997">Cell inner membrane</keyword>
<keyword id="KW-1003">Cell membrane</keyword>
<keyword id="KW-0472">Membrane</keyword>
<keyword id="KW-0732">Signal</keyword>
<keyword id="KW-0813">Transport</keyword>
<protein>
    <recommendedName>
        <fullName evidence="1">Multidrug resistance protein MdtA</fullName>
    </recommendedName>
    <alternativeName>
        <fullName evidence="1">Multidrug transporter MdtA</fullName>
    </alternativeName>
</protein>
<sequence length="415" mass="44498">MKGSYKSRWVIVIVVVIAAIAAFWFWQGRNDSQSAAPGATKQAQQSPAGGRRGMRSGPLAPVQAATAVEQAVPRYLTGLGTITAANTVTVRSRVDGQLMALHFQEGQQVKAGDLLAEIDPSQFKVALAQAQGQLAKDKATLTNARRDLARYQQLAKTNLVSRQELDAQQALVSETEGTIKADEASVASAQLQLDWSRITAPVDGRVGLKQVDVGNQISSGDTTGIVVITQTHPIDLLFTLPESDIATVVQAQKAGKPLVVEAWDRTNSKKLSEGTLLSLDNQIDATTGTIKVKARFNNQDDALFPNQFVNARMLVDTEQNAVVIPTAALQMGNEGHFVWVLNSENKVSKHLVTPGIQDSQKVVIRAGISAGDRVVTDGIDRLTEGAKVEVVEAQSATTPEEKATSREYAKKGARS</sequence>
<reference key="1">
    <citation type="journal article" date="2011" name="Proc. Natl. Acad. Sci. U.S.A.">
        <title>Genomic anatomy of Escherichia coli O157:H7 outbreaks.</title>
        <authorList>
            <person name="Eppinger M."/>
            <person name="Mammel M.K."/>
            <person name="Leclerc J.E."/>
            <person name="Ravel J."/>
            <person name="Cebula T.A."/>
        </authorList>
    </citation>
    <scope>NUCLEOTIDE SEQUENCE [LARGE SCALE GENOMIC DNA]</scope>
    <source>
        <strain>EC4115 / EHEC</strain>
    </source>
</reference>
<name>MDTA_ECO5E</name>
<feature type="signal peptide" evidence="1">
    <location>
        <begin position="1"/>
        <end position="21"/>
    </location>
</feature>
<feature type="chain" id="PRO_1000145635" description="Multidrug resistance protein MdtA">
    <location>
        <begin position="22"/>
        <end position="415"/>
    </location>
</feature>
<feature type="region of interest" description="Disordered" evidence="2">
    <location>
        <begin position="31"/>
        <end position="60"/>
    </location>
</feature>
<feature type="region of interest" description="Disordered" evidence="2">
    <location>
        <begin position="392"/>
        <end position="415"/>
    </location>
</feature>
<feature type="compositionally biased region" description="Polar residues" evidence="2">
    <location>
        <begin position="31"/>
        <end position="47"/>
    </location>
</feature>
<feature type="compositionally biased region" description="Basic and acidic residues" evidence="2">
    <location>
        <begin position="399"/>
        <end position="415"/>
    </location>
</feature>
<proteinExistence type="inferred from homology"/>
<gene>
    <name evidence="1" type="primary">mdtA</name>
    <name type="ordered locus">ECH74115_3014</name>
</gene>
<accession>B5YUD2</accession>
<organism>
    <name type="scientific">Escherichia coli O157:H7 (strain EC4115 / EHEC)</name>
    <dbReference type="NCBI Taxonomy" id="444450"/>
    <lineage>
        <taxon>Bacteria</taxon>
        <taxon>Pseudomonadati</taxon>
        <taxon>Pseudomonadota</taxon>
        <taxon>Gammaproteobacteria</taxon>
        <taxon>Enterobacterales</taxon>
        <taxon>Enterobacteriaceae</taxon>
        <taxon>Escherichia</taxon>
    </lineage>
</organism>
<dbReference type="EMBL" id="CP001164">
    <property type="protein sequence ID" value="ACI38966.1"/>
    <property type="molecule type" value="Genomic_DNA"/>
</dbReference>
<dbReference type="RefSeq" id="WP_000678969.1">
    <property type="nucleotide sequence ID" value="NC_011353.1"/>
</dbReference>
<dbReference type="SMR" id="B5YUD2"/>
<dbReference type="KEGG" id="ecf:ECH74115_3014"/>
<dbReference type="HOGENOM" id="CLU_018816_2_0_6"/>
<dbReference type="GO" id="GO:1990281">
    <property type="term" value="C:efflux pump complex"/>
    <property type="evidence" value="ECO:0007669"/>
    <property type="project" value="TreeGrafter"/>
</dbReference>
<dbReference type="GO" id="GO:0005886">
    <property type="term" value="C:plasma membrane"/>
    <property type="evidence" value="ECO:0007669"/>
    <property type="project" value="UniProtKB-SubCell"/>
</dbReference>
<dbReference type="GO" id="GO:0015562">
    <property type="term" value="F:efflux transmembrane transporter activity"/>
    <property type="evidence" value="ECO:0007669"/>
    <property type="project" value="TreeGrafter"/>
</dbReference>
<dbReference type="FunFam" id="2.40.420.20:FF:000001">
    <property type="entry name" value="Efflux RND transporter periplasmic adaptor subunit"/>
    <property type="match status" value="1"/>
</dbReference>
<dbReference type="FunFam" id="1.10.287.470:FF:000005">
    <property type="entry name" value="Multidrug resistance protein MdtA"/>
    <property type="match status" value="1"/>
</dbReference>
<dbReference type="FunFam" id="2.40.30.170:FF:000006">
    <property type="entry name" value="Multidrug resistance protein MdtA"/>
    <property type="match status" value="1"/>
</dbReference>
<dbReference type="Gene3D" id="2.40.30.170">
    <property type="match status" value="1"/>
</dbReference>
<dbReference type="Gene3D" id="2.40.420.20">
    <property type="match status" value="1"/>
</dbReference>
<dbReference type="Gene3D" id="2.40.50.100">
    <property type="match status" value="1"/>
</dbReference>
<dbReference type="Gene3D" id="1.10.287.470">
    <property type="entry name" value="Helix hairpin bin"/>
    <property type="match status" value="1"/>
</dbReference>
<dbReference type="HAMAP" id="MF_01422">
    <property type="entry name" value="MdtA"/>
    <property type="match status" value="1"/>
</dbReference>
<dbReference type="InterPro" id="IPR032317">
    <property type="entry name" value="CusB_D23"/>
</dbReference>
<dbReference type="InterPro" id="IPR022824">
    <property type="entry name" value="Multidrug-R_MdtA"/>
</dbReference>
<dbReference type="InterPro" id="IPR006143">
    <property type="entry name" value="RND_pump_MFP"/>
</dbReference>
<dbReference type="NCBIfam" id="NF008589">
    <property type="entry name" value="PRK11556.1"/>
    <property type="match status" value="1"/>
</dbReference>
<dbReference type="NCBIfam" id="TIGR01730">
    <property type="entry name" value="RND_mfp"/>
    <property type="match status" value="1"/>
</dbReference>
<dbReference type="PANTHER" id="PTHR30469">
    <property type="entry name" value="MULTIDRUG RESISTANCE PROTEIN MDTA"/>
    <property type="match status" value="1"/>
</dbReference>
<dbReference type="PANTHER" id="PTHR30469:SF12">
    <property type="entry name" value="MULTIDRUG RESISTANCE PROTEIN MDTA"/>
    <property type="match status" value="1"/>
</dbReference>
<dbReference type="Pfam" id="PF16576">
    <property type="entry name" value="HlyD_D23"/>
    <property type="match status" value="1"/>
</dbReference>
<dbReference type="SUPFAM" id="SSF111369">
    <property type="entry name" value="HlyD-like secretion proteins"/>
    <property type="match status" value="1"/>
</dbReference>
<comment type="function">
    <text evidence="1">The MdtABC tripartite complex confers resistance against novobiocin and deoxycholate.</text>
</comment>
<comment type="subunit">
    <text evidence="1">Part of a tripartite efflux system composed of MdtA, MdtB and MdtC.</text>
</comment>
<comment type="subcellular location">
    <subcellularLocation>
        <location evidence="1">Cell inner membrane</location>
        <topology evidence="1">Peripheral membrane protein</topology>
    </subcellularLocation>
</comment>
<comment type="induction">
    <text evidence="1">The mdtABC operon is transcriptionally activated by BaeR.</text>
</comment>
<comment type="similarity">
    <text evidence="1">Belongs to the membrane fusion protein (MFP) (TC 8.A.1) family.</text>
</comment>
<evidence type="ECO:0000255" key="1">
    <source>
        <dbReference type="HAMAP-Rule" id="MF_01422"/>
    </source>
</evidence>
<evidence type="ECO:0000256" key="2">
    <source>
        <dbReference type="SAM" id="MobiDB-lite"/>
    </source>
</evidence>